<accession>A1A925</accession>
<gene>
    <name evidence="1" type="primary">moaC</name>
    <name type="ordered locus">Ecok1_06710</name>
    <name type="ORF">APECO1_1306</name>
</gene>
<sequence>MSQLTHINAAGEAHMVDVSAKAETVREARAEAFVTMRSETLAMIIDGRHHKGDVFATARIAGIQAAKRTWDLIPLCHPLMLSKVEVNLQAEPEHNRVRIETLCRLTGKTGVEMEALTAASVAALTIYDMCKAVQKDMVIGPVRLLAKSGGKSGDFKVEADD</sequence>
<reference key="1">
    <citation type="journal article" date="2007" name="J. Bacteriol.">
        <title>The genome sequence of avian pathogenic Escherichia coli strain O1:K1:H7 shares strong similarities with human extraintestinal pathogenic E. coli genomes.</title>
        <authorList>
            <person name="Johnson T.J."/>
            <person name="Kariyawasam S."/>
            <person name="Wannemuehler Y."/>
            <person name="Mangiamele P."/>
            <person name="Johnson S.J."/>
            <person name="Doetkott C."/>
            <person name="Skyberg J.A."/>
            <person name="Lynne A.M."/>
            <person name="Johnson J.R."/>
            <person name="Nolan L.K."/>
        </authorList>
    </citation>
    <scope>NUCLEOTIDE SEQUENCE [LARGE SCALE GENOMIC DNA]</scope>
</reference>
<dbReference type="EC" id="4.6.1.17" evidence="1"/>
<dbReference type="EMBL" id="CP000468">
    <property type="protein sequence ID" value="ABJ00165.1"/>
    <property type="molecule type" value="Genomic_DNA"/>
</dbReference>
<dbReference type="RefSeq" id="WP_000080885.1">
    <property type="nucleotide sequence ID" value="NZ_CADILS010000026.1"/>
</dbReference>
<dbReference type="SMR" id="A1A925"/>
<dbReference type="GeneID" id="86945666"/>
<dbReference type="KEGG" id="ecv:APECO1_1306"/>
<dbReference type="HOGENOM" id="CLU_074693_1_1_6"/>
<dbReference type="UniPathway" id="UPA00344"/>
<dbReference type="Proteomes" id="UP000008216">
    <property type="component" value="Chromosome"/>
</dbReference>
<dbReference type="GO" id="GO:0061799">
    <property type="term" value="F:cyclic pyranopterin monophosphate synthase activity"/>
    <property type="evidence" value="ECO:0007669"/>
    <property type="project" value="UniProtKB-UniRule"/>
</dbReference>
<dbReference type="GO" id="GO:0006777">
    <property type="term" value="P:Mo-molybdopterin cofactor biosynthetic process"/>
    <property type="evidence" value="ECO:0007669"/>
    <property type="project" value="UniProtKB-UniRule"/>
</dbReference>
<dbReference type="CDD" id="cd01420">
    <property type="entry name" value="MoaC_PE"/>
    <property type="match status" value="1"/>
</dbReference>
<dbReference type="FunFam" id="3.30.70.640:FF:000001">
    <property type="entry name" value="Cyclic pyranopterin monophosphate synthase"/>
    <property type="match status" value="1"/>
</dbReference>
<dbReference type="Gene3D" id="3.30.70.640">
    <property type="entry name" value="Molybdopterin cofactor biosynthesis C (MoaC) domain"/>
    <property type="match status" value="1"/>
</dbReference>
<dbReference type="HAMAP" id="MF_01224_B">
    <property type="entry name" value="MoaC_B"/>
    <property type="match status" value="1"/>
</dbReference>
<dbReference type="InterPro" id="IPR023045">
    <property type="entry name" value="MoaC"/>
</dbReference>
<dbReference type="InterPro" id="IPR047594">
    <property type="entry name" value="MoaC_bact/euk"/>
</dbReference>
<dbReference type="InterPro" id="IPR036522">
    <property type="entry name" value="MoaC_sf"/>
</dbReference>
<dbReference type="InterPro" id="IPR050105">
    <property type="entry name" value="MoCo_biosynth_MoaA/MoaC"/>
</dbReference>
<dbReference type="InterPro" id="IPR002820">
    <property type="entry name" value="Mopterin_CF_biosynth-C_dom"/>
</dbReference>
<dbReference type="NCBIfam" id="TIGR00581">
    <property type="entry name" value="moaC"/>
    <property type="match status" value="1"/>
</dbReference>
<dbReference type="NCBIfam" id="NF006870">
    <property type="entry name" value="PRK09364.1"/>
    <property type="match status" value="1"/>
</dbReference>
<dbReference type="PANTHER" id="PTHR22960">
    <property type="entry name" value="MOLYBDOPTERIN COFACTOR SYNTHESIS PROTEIN A"/>
    <property type="match status" value="1"/>
</dbReference>
<dbReference type="Pfam" id="PF01967">
    <property type="entry name" value="MoaC"/>
    <property type="match status" value="1"/>
</dbReference>
<dbReference type="SUPFAM" id="SSF55040">
    <property type="entry name" value="Molybdenum cofactor biosynthesis protein C, MoaC"/>
    <property type="match status" value="1"/>
</dbReference>
<protein>
    <recommendedName>
        <fullName evidence="1">Cyclic pyranopterin monophosphate synthase</fullName>
        <ecNumber evidence="1">4.6.1.17</ecNumber>
    </recommendedName>
    <alternativeName>
        <fullName evidence="1">Molybdenum cofactor biosynthesis protein C</fullName>
    </alternativeName>
</protein>
<name>MOAC_ECOK1</name>
<feature type="chain" id="PRO_1000054091" description="Cyclic pyranopterin monophosphate synthase">
    <location>
        <begin position="1"/>
        <end position="161"/>
    </location>
</feature>
<feature type="active site" evidence="1">
    <location>
        <position position="128"/>
    </location>
</feature>
<feature type="binding site" evidence="1">
    <location>
        <begin position="75"/>
        <end position="77"/>
    </location>
    <ligand>
        <name>substrate</name>
    </ligand>
</feature>
<feature type="binding site" evidence="1">
    <location>
        <begin position="113"/>
        <end position="114"/>
    </location>
    <ligand>
        <name>substrate</name>
    </ligand>
</feature>
<keyword id="KW-0456">Lyase</keyword>
<keyword id="KW-0501">Molybdenum cofactor biosynthesis</keyword>
<keyword id="KW-1185">Reference proteome</keyword>
<evidence type="ECO:0000255" key="1">
    <source>
        <dbReference type="HAMAP-Rule" id="MF_01224"/>
    </source>
</evidence>
<organism>
    <name type="scientific">Escherichia coli O1:K1 / APEC</name>
    <dbReference type="NCBI Taxonomy" id="405955"/>
    <lineage>
        <taxon>Bacteria</taxon>
        <taxon>Pseudomonadati</taxon>
        <taxon>Pseudomonadota</taxon>
        <taxon>Gammaproteobacteria</taxon>
        <taxon>Enterobacterales</taxon>
        <taxon>Enterobacteriaceae</taxon>
        <taxon>Escherichia</taxon>
    </lineage>
</organism>
<comment type="function">
    <text evidence="1">Catalyzes the conversion of (8S)-3',8-cyclo-7,8-dihydroguanosine 5'-triphosphate to cyclic pyranopterin monophosphate (cPMP).</text>
</comment>
<comment type="catalytic activity">
    <reaction evidence="1">
        <text>(8S)-3',8-cyclo-7,8-dihydroguanosine 5'-triphosphate = cyclic pyranopterin phosphate + diphosphate</text>
        <dbReference type="Rhea" id="RHEA:49580"/>
        <dbReference type="ChEBI" id="CHEBI:33019"/>
        <dbReference type="ChEBI" id="CHEBI:59648"/>
        <dbReference type="ChEBI" id="CHEBI:131766"/>
        <dbReference type="EC" id="4.6.1.17"/>
    </reaction>
</comment>
<comment type="pathway">
    <text evidence="1">Cofactor biosynthesis; molybdopterin biosynthesis.</text>
</comment>
<comment type="subunit">
    <text evidence="1">Homohexamer; trimer of dimers.</text>
</comment>
<comment type="similarity">
    <text evidence="1">Belongs to the MoaC family.</text>
</comment>
<proteinExistence type="inferred from homology"/>